<gene>
    <name type="primary">ydbO</name>
    <name type="ordered locus">BSU04540</name>
</gene>
<organism>
    <name type="scientific">Bacillus subtilis (strain 168)</name>
    <dbReference type="NCBI Taxonomy" id="224308"/>
    <lineage>
        <taxon>Bacteria</taxon>
        <taxon>Bacillati</taxon>
        <taxon>Bacillota</taxon>
        <taxon>Bacilli</taxon>
        <taxon>Bacillales</taxon>
        <taxon>Bacillaceae</taxon>
        <taxon>Bacillus</taxon>
    </lineage>
</organism>
<name>YDBO_BACSU</name>
<protein>
    <recommendedName>
        <fullName>Uncharacterized transporter YdbO</fullName>
    </recommendedName>
</protein>
<comment type="subcellular location">
    <subcellularLocation>
        <location evidence="2">Cell membrane</location>
        <topology evidence="2">Multi-pass membrane protein</topology>
    </subcellularLocation>
</comment>
<comment type="similarity">
    <text evidence="2">Belongs to the cation diffusion facilitator (CDF) transporter (TC 2.A.4) family.</text>
</comment>
<sequence>MERTENLKKGEKGALLNIFAYVILAVVKLVIGILYHSEALRADGLNNGTDIVASVAVLIGLRISQRPADSDHPYGHYRAETISSLVASFIMMAVGIEVLIGGGKAIAGGTTETPNLIAAWTALGSAVFMYGIYLYNKRLAASIKSSALMAAAKDSRSDAFVSAGAFIGVFSSQLKLPWVDPVTAFIIGIIICKTAWDIFKDASHSLTDGFHLKDLEPYKQTVGRIENVHRLKDVKARYLGSTVHIEMVITVDPKLTVEEGHGVADEVEDKIKHEHDVTHVHVHVEPDDIK</sequence>
<feature type="chain" id="PRO_0000359917" description="Uncharacterized transporter YdbO">
    <location>
        <begin position="1"/>
        <end position="290"/>
    </location>
</feature>
<feature type="transmembrane region" description="Helical" evidence="1">
    <location>
        <begin position="14"/>
        <end position="34"/>
    </location>
</feature>
<feature type="transmembrane region" description="Helical" evidence="1">
    <location>
        <begin position="82"/>
        <end position="102"/>
    </location>
</feature>
<feature type="transmembrane region" description="Helical" evidence="1">
    <location>
        <begin position="115"/>
        <end position="135"/>
    </location>
</feature>
<feature type="transmembrane region" description="Helical" evidence="1">
    <location>
        <begin position="158"/>
        <end position="174"/>
    </location>
</feature>
<feature type="transmembrane region" description="Helical" evidence="1">
    <location>
        <begin position="176"/>
        <end position="196"/>
    </location>
</feature>
<evidence type="ECO:0000255" key="1"/>
<evidence type="ECO:0000305" key="2"/>
<proteinExistence type="inferred from homology"/>
<accession>P96610</accession>
<accession>Q797L2</accession>
<reference key="1">
    <citation type="submission" date="1997-03" db="EMBL/GenBank/DDBJ databases">
        <title>A 148 kbp sequence of the region between 35 and 47 degree of the Bacillus subtilis genome.</title>
        <authorList>
            <person name="Kasahara Y."/>
            <person name="Nakai S."/>
            <person name="Lee S."/>
            <person name="Sadaie Y."/>
            <person name="Ogasawara N."/>
        </authorList>
    </citation>
    <scope>NUCLEOTIDE SEQUENCE [GENOMIC DNA]</scope>
    <source>
        <strain>168</strain>
    </source>
</reference>
<reference key="2">
    <citation type="journal article" date="1997" name="Nature">
        <title>The complete genome sequence of the Gram-positive bacterium Bacillus subtilis.</title>
        <authorList>
            <person name="Kunst F."/>
            <person name="Ogasawara N."/>
            <person name="Moszer I."/>
            <person name="Albertini A.M."/>
            <person name="Alloni G."/>
            <person name="Azevedo V."/>
            <person name="Bertero M.G."/>
            <person name="Bessieres P."/>
            <person name="Bolotin A."/>
            <person name="Borchert S."/>
            <person name="Borriss R."/>
            <person name="Boursier L."/>
            <person name="Brans A."/>
            <person name="Braun M."/>
            <person name="Brignell S.C."/>
            <person name="Bron S."/>
            <person name="Brouillet S."/>
            <person name="Bruschi C.V."/>
            <person name="Caldwell B."/>
            <person name="Capuano V."/>
            <person name="Carter N.M."/>
            <person name="Choi S.-K."/>
            <person name="Codani J.-J."/>
            <person name="Connerton I.F."/>
            <person name="Cummings N.J."/>
            <person name="Daniel R.A."/>
            <person name="Denizot F."/>
            <person name="Devine K.M."/>
            <person name="Duesterhoeft A."/>
            <person name="Ehrlich S.D."/>
            <person name="Emmerson P.T."/>
            <person name="Entian K.-D."/>
            <person name="Errington J."/>
            <person name="Fabret C."/>
            <person name="Ferrari E."/>
            <person name="Foulger D."/>
            <person name="Fritz C."/>
            <person name="Fujita M."/>
            <person name="Fujita Y."/>
            <person name="Fuma S."/>
            <person name="Galizzi A."/>
            <person name="Galleron N."/>
            <person name="Ghim S.-Y."/>
            <person name="Glaser P."/>
            <person name="Goffeau A."/>
            <person name="Golightly E.J."/>
            <person name="Grandi G."/>
            <person name="Guiseppi G."/>
            <person name="Guy B.J."/>
            <person name="Haga K."/>
            <person name="Haiech J."/>
            <person name="Harwood C.R."/>
            <person name="Henaut A."/>
            <person name="Hilbert H."/>
            <person name="Holsappel S."/>
            <person name="Hosono S."/>
            <person name="Hullo M.-F."/>
            <person name="Itaya M."/>
            <person name="Jones L.-M."/>
            <person name="Joris B."/>
            <person name="Karamata D."/>
            <person name="Kasahara Y."/>
            <person name="Klaerr-Blanchard M."/>
            <person name="Klein C."/>
            <person name="Kobayashi Y."/>
            <person name="Koetter P."/>
            <person name="Koningstein G."/>
            <person name="Krogh S."/>
            <person name="Kumano M."/>
            <person name="Kurita K."/>
            <person name="Lapidus A."/>
            <person name="Lardinois S."/>
            <person name="Lauber J."/>
            <person name="Lazarevic V."/>
            <person name="Lee S.-M."/>
            <person name="Levine A."/>
            <person name="Liu H."/>
            <person name="Masuda S."/>
            <person name="Mauel C."/>
            <person name="Medigue C."/>
            <person name="Medina N."/>
            <person name="Mellado R.P."/>
            <person name="Mizuno M."/>
            <person name="Moestl D."/>
            <person name="Nakai S."/>
            <person name="Noback M."/>
            <person name="Noone D."/>
            <person name="O'Reilly M."/>
            <person name="Ogawa K."/>
            <person name="Ogiwara A."/>
            <person name="Oudega B."/>
            <person name="Park S.-H."/>
            <person name="Parro V."/>
            <person name="Pohl T.M."/>
            <person name="Portetelle D."/>
            <person name="Porwollik S."/>
            <person name="Prescott A.M."/>
            <person name="Presecan E."/>
            <person name="Pujic P."/>
            <person name="Purnelle B."/>
            <person name="Rapoport G."/>
            <person name="Rey M."/>
            <person name="Reynolds S."/>
            <person name="Rieger M."/>
            <person name="Rivolta C."/>
            <person name="Rocha E."/>
            <person name="Roche B."/>
            <person name="Rose M."/>
            <person name="Sadaie Y."/>
            <person name="Sato T."/>
            <person name="Scanlan E."/>
            <person name="Schleich S."/>
            <person name="Schroeter R."/>
            <person name="Scoffone F."/>
            <person name="Sekiguchi J."/>
            <person name="Sekowska A."/>
            <person name="Seror S.J."/>
            <person name="Serror P."/>
            <person name="Shin B.-S."/>
            <person name="Soldo B."/>
            <person name="Sorokin A."/>
            <person name="Tacconi E."/>
            <person name="Takagi T."/>
            <person name="Takahashi H."/>
            <person name="Takemaru K."/>
            <person name="Takeuchi M."/>
            <person name="Tamakoshi A."/>
            <person name="Tanaka T."/>
            <person name="Terpstra P."/>
            <person name="Tognoni A."/>
            <person name="Tosato V."/>
            <person name="Uchiyama S."/>
            <person name="Vandenbol M."/>
            <person name="Vannier F."/>
            <person name="Vassarotti A."/>
            <person name="Viari A."/>
            <person name="Wambutt R."/>
            <person name="Wedler E."/>
            <person name="Wedler H."/>
            <person name="Weitzenegger T."/>
            <person name="Winters P."/>
            <person name="Wipat A."/>
            <person name="Yamamoto H."/>
            <person name="Yamane K."/>
            <person name="Yasumoto K."/>
            <person name="Yata K."/>
            <person name="Yoshida K."/>
            <person name="Yoshikawa H.-F."/>
            <person name="Zumstein E."/>
            <person name="Yoshikawa H."/>
            <person name="Danchin A."/>
        </authorList>
    </citation>
    <scope>NUCLEOTIDE SEQUENCE [LARGE SCALE GENOMIC DNA]</scope>
    <source>
        <strain>168</strain>
    </source>
</reference>
<dbReference type="EMBL" id="AB001488">
    <property type="protein sequence ID" value="BAA19291.1"/>
    <property type="molecule type" value="Genomic_DNA"/>
</dbReference>
<dbReference type="EMBL" id="AL009126">
    <property type="protein sequence ID" value="CAB12261.1"/>
    <property type="molecule type" value="Genomic_DNA"/>
</dbReference>
<dbReference type="PIR" id="B69772">
    <property type="entry name" value="B69772"/>
</dbReference>
<dbReference type="RefSeq" id="NP_388335.1">
    <property type="nucleotide sequence ID" value="NC_000964.3"/>
</dbReference>
<dbReference type="RefSeq" id="WP_003234329.1">
    <property type="nucleotide sequence ID" value="NZ_OZ025638.1"/>
</dbReference>
<dbReference type="SMR" id="P96610"/>
<dbReference type="FunCoup" id="P96610">
    <property type="interactions" value="454"/>
</dbReference>
<dbReference type="STRING" id="224308.BSU04540"/>
<dbReference type="PaxDb" id="224308-BSU04540"/>
<dbReference type="EnsemblBacteria" id="CAB12261">
    <property type="protein sequence ID" value="CAB12261"/>
    <property type="gene ID" value="BSU_04540"/>
</dbReference>
<dbReference type="GeneID" id="938225"/>
<dbReference type="KEGG" id="bsu:BSU04540"/>
<dbReference type="PATRIC" id="fig|224308.179.peg.482"/>
<dbReference type="eggNOG" id="COG0053">
    <property type="taxonomic scope" value="Bacteria"/>
</dbReference>
<dbReference type="InParanoid" id="P96610"/>
<dbReference type="OrthoDB" id="9806522at2"/>
<dbReference type="PhylomeDB" id="P96610"/>
<dbReference type="BioCyc" id="BSUB:BSU04540-MONOMER"/>
<dbReference type="Proteomes" id="UP000001570">
    <property type="component" value="Chromosome"/>
</dbReference>
<dbReference type="GO" id="GO:0016020">
    <property type="term" value="C:membrane"/>
    <property type="evidence" value="ECO:0000318"/>
    <property type="project" value="GO_Central"/>
</dbReference>
<dbReference type="GO" id="GO:0005886">
    <property type="term" value="C:plasma membrane"/>
    <property type="evidence" value="ECO:0007669"/>
    <property type="project" value="UniProtKB-SubCell"/>
</dbReference>
<dbReference type="GO" id="GO:0008324">
    <property type="term" value="F:monoatomic cation transmembrane transporter activity"/>
    <property type="evidence" value="ECO:0000318"/>
    <property type="project" value="GO_Central"/>
</dbReference>
<dbReference type="FunFam" id="3.30.70.1350:FF:000006">
    <property type="entry name" value="Cation transporter"/>
    <property type="match status" value="1"/>
</dbReference>
<dbReference type="FunFam" id="1.20.1510.10:FF:000006">
    <property type="entry name" value="Divalent cation efflux transporter"/>
    <property type="match status" value="1"/>
</dbReference>
<dbReference type="Gene3D" id="1.20.1510.10">
    <property type="entry name" value="Cation efflux protein transmembrane domain"/>
    <property type="match status" value="1"/>
</dbReference>
<dbReference type="Gene3D" id="3.30.70.1350">
    <property type="entry name" value="Cation efflux protein, cytoplasmic domain"/>
    <property type="match status" value="1"/>
</dbReference>
<dbReference type="InterPro" id="IPR002524">
    <property type="entry name" value="Cation_efflux"/>
</dbReference>
<dbReference type="InterPro" id="IPR027470">
    <property type="entry name" value="Cation_efflux_CTD"/>
</dbReference>
<dbReference type="InterPro" id="IPR036837">
    <property type="entry name" value="Cation_efflux_CTD_sf"/>
</dbReference>
<dbReference type="InterPro" id="IPR027469">
    <property type="entry name" value="Cation_efflux_TMD_sf"/>
</dbReference>
<dbReference type="InterPro" id="IPR050291">
    <property type="entry name" value="CDF_Transporter"/>
</dbReference>
<dbReference type="NCBIfam" id="TIGR01297">
    <property type="entry name" value="CDF"/>
    <property type="match status" value="1"/>
</dbReference>
<dbReference type="PANTHER" id="PTHR43840:SF50">
    <property type="entry name" value="MANGANESE EFFLUX SYSTEM PROTEIN MNES"/>
    <property type="match status" value="1"/>
</dbReference>
<dbReference type="PANTHER" id="PTHR43840">
    <property type="entry name" value="MITOCHONDRIAL METAL TRANSPORTER 1-RELATED"/>
    <property type="match status" value="1"/>
</dbReference>
<dbReference type="Pfam" id="PF01545">
    <property type="entry name" value="Cation_efflux"/>
    <property type="match status" value="1"/>
</dbReference>
<dbReference type="Pfam" id="PF16916">
    <property type="entry name" value="ZT_dimer"/>
    <property type="match status" value="1"/>
</dbReference>
<dbReference type="SUPFAM" id="SSF160240">
    <property type="entry name" value="Cation efflux protein cytoplasmic domain-like"/>
    <property type="match status" value="1"/>
</dbReference>
<dbReference type="SUPFAM" id="SSF161111">
    <property type="entry name" value="Cation efflux protein transmembrane domain-like"/>
    <property type="match status" value="1"/>
</dbReference>
<keyword id="KW-1003">Cell membrane</keyword>
<keyword id="KW-0472">Membrane</keyword>
<keyword id="KW-1185">Reference proteome</keyword>
<keyword id="KW-0812">Transmembrane</keyword>
<keyword id="KW-1133">Transmembrane helix</keyword>
<keyword id="KW-0813">Transport</keyword>